<dbReference type="EC" id="2.7.8.7" evidence="1"/>
<dbReference type="EMBL" id="BX897699">
    <property type="protein sequence ID" value="CAF27315.1"/>
    <property type="molecule type" value="Genomic_DNA"/>
</dbReference>
<dbReference type="RefSeq" id="WP_011180438.1">
    <property type="nucleotide sequence ID" value="NZ_LRIJ02000001.1"/>
</dbReference>
<dbReference type="SMR" id="Q6G461"/>
<dbReference type="PaxDb" id="283166-BH05070"/>
<dbReference type="EnsemblBacteria" id="CAF27315">
    <property type="protein sequence ID" value="CAF27315"/>
    <property type="gene ID" value="BH05070"/>
</dbReference>
<dbReference type="GeneID" id="92985164"/>
<dbReference type="KEGG" id="bhe:BH05070"/>
<dbReference type="eggNOG" id="COG0736">
    <property type="taxonomic scope" value="Bacteria"/>
</dbReference>
<dbReference type="OrthoDB" id="517356at2"/>
<dbReference type="Proteomes" id="UP000000421">
    <property type="component" value="Chromosome"/>
</dbReference>
<dbReference type="GO" id="GO:0005737">
    <property type="term" value="C:cytoplasm"/>
    <property type="evidence" value="ECO:0007669"/>
    <property type="project" value="UniProtKB-SubCell"/>
</dbReference>
<dbReference type="GO" id="GO:0008897">
    <property type="term" value="F:holo-[acyl-carrier-protein] synthase activity"/>
    <property type="evidence" value="ECO:0007669"/>
    <property type="project" value="UniProtKB-UniRule"/>
</dbReference>
<dbReference type="GO" id="GO:0000287">
    <property type="term" value="F:magnesium ion binding"/>
    <property type="evidence" value="ECO:0007669"/>
    <property type="project" value="UniProtKB-UniRule"/>
</dbReference>
<dbReference type="GO" id="GO:0006633">
    <property type="term" value="P:fatty acid biosynthetic process"/>
    <property type="evidence" value="ECO:0007669"/>
    <property type="project" value="UniProtKB-UniRule"/>
</dbReference>
<dbReference type="Gene3D" id="3.90.470.20">
    <property type="entry name" value="4'-phosphopantetheinyl transferase domain"/>
    <property type="match status" value="1"/>
</dbReference>
<dbReference type="HAMAP" id="MF_00101">
    <property type="entry name" value="AcpS"/>
    <property type="match status" value="1"/>
</dbReference>
<dbReference type="InterPro" id="IPR008278">
    <property type="entry name" value="4-PPantetheinyl_Trfase_dom"/>
</dbReference>
<dbReference type="InterPro" id="IPR037143">
    <property type="entry name" value="4-PPantetheinyl_Trfase_dom_sf"/>
</dbReference>
<dbReference type="InterPro" id="IPR002582">
    <property type="entry name" value="ACPS"/>
</dbReference>
<dbReference type="InterPro" id="IPR004568">
    <property type="entry name" value="Ppantetheine-prot_Trfase_dom"/>
</dbReference>
<dbReference type="NCBIfam" id="TIGR00516">
    <property type="entry name" value="acpS"/>
    <property type="match status" value="1"/>
</dbReference>
<dbReference type="NCBIfam" id="TIGR00556">
    <property type="entry name" value="pantethn_trn"/>
    <property type="match status" value="1"/>
</dbReference>
<dbReference type="Pfam" id="PF01648">
    <property type="entry name" value="ACPS"/>
    <property type="match status" value="1"/>
</dbReference>
<dbReference type="SUPFAM" id="SSF56214">
    <property type="entry name" value="4'-phosphopantetheinyl transferase"/>
    <property type="match status" value="1"/>
</dbReference>
<proteinExistence type="inferred from homology"/>
<keyword id="KW-0963">Cytoplasm</keyword>
<keyword id="KW-0275">Fatty acid biosynthesis</keyword>
<keyword id="KW-0276">Fatty acid metabolism</keyword>
<keyword id="KW-0444">Lipid biosynthesis</keyword>
<keyword id="KW-0443">Lipid metabolism</keyword>
<keyword id="KW-0460">Magnesium</keyword>
<keyword id="KW-0479">Metal-binding</keyword>
<keyword id="KW-0808">Transferase</keyword>
<evidence type="ECO:0000255" key="1">
    <source>
        <dbReference type="HAMAP-Rule" id="MF_00101"/>
    </source>
</evidence>
<organism>
    <name type="scientific">Bartonella henselae (strain ATCC 49882 / DSM 28221 / CCUG 30454 / Houston 1)</name>
    <name type="common">Rochalimaea henselae</name>
    <dbReference type="NCBI Taxonomy" id="283166"/>
    <lineage>
        <taxon>Bacteria</taxon>
        <taxon>Pseudomonadati</taxon>
        <taxon>Pseudomonadota</taxon>
        <taxon>Alphaproteobacteria</taxon>
        <taxon>Hyphomicrobiales</taxon>
        <taxon>Bartonellaceae</taxon>
        <taxon>Bartonella</taxon>
    </lineage>
</organism>
<accession>Q6G461</accession>
<sequence length="133" mass="15007">MIVGLGSDLTDIRRIERMLARYGDRFVQRIFTDIERNRSESLQKKSSSYAKRFAAKEACAKALGTGIACGINWKDMGVINLPSGKPIMKLTNRAQMQLQKLLPSHHDAIIHLSMTDDFPWAQAFIIIEAFPRG</sequence>
<protein>
    <recommendedName>
        <fullName evidence="1">Holo-[acyl-carrier-protein] synthase</fullName>
        <shortName evidence="1">Holo-ACP synthase</shortName>
        <ecNumber evidence="1">2.7.8.7</ecNumber>
    </recommendedName>
    <alternativeName>
        <fullName evidence="1">4'-phosphopantetheinyl transferase AcpS</fullName>
    </alternativeName>
</protein>
<feature type="chain" id="PRO_0000175614" description="Holo-[acyl-carrier-protein] synthase">
    <location>
        <begin position="1"/>
        <end position="133"/>
    </location>
</feature>
<feature type="binding site" evidence="1">
    <location>
        <position position="8"/>
    </location>
    <ligand>
        <name>Mg(2+)</name>
        <dbReference type="ChEBI" id="CHEBI:18420"/>
    </ligand>
</feature>
<feature type="binding site" evidence="1">
    <location>
        <position position="57"/>
    </location>
    <ligand>
        <name>Mg(2+)</name>
        <dbReference type="ChEBI" id="CHEBI:18420"/>
    </ligand>
</feature>
<gene>
    <name evidence="1" type="primary">acpS</name>
    <name type="ordered locus">BH05070</name>
</gene>
<reference key="1">
    <citation type="journal article" date="2004" name="Proc. Natl. Acad. Sci. U.S.A.">
        <title>The louse-borne human pathogen Bartonella quintana is a genomic derivative of the zoonotic agent Bartonella henselae.</title>
        <authorList>
            <person name="Alsmark U.C.M."/>
            <person name="Frank A.C."/>
            <person name="Karlberg E.O."/>
            <person name="Legault B.-A."/>
            <person name="Ardell D.H."/>
            <person name="Canbaeck B."/>
            <person name="Eriksson A.-S."/>
            <person name="Naeslund A.K."/>
            <person name="Handley S.A."/>
            <person name="Huvet M."/>
            <person name="La Scola B."/>
            <person name="Holmberg M."/>
            <person name="Andersson S.G.E."/>
        </authorList>
    </citation>
    <scope>NUCLEOTIDE SEQUENCE [LARGE SCALE GENOMIC DNA]</scope>
    <source>
        <strain>ATCC 49882 / DSM 28221 / CCUG 30454 / Houston 1</strain>
    </source>
</reference>
<comment type="function">
    <text evidence="1">Transfers the 4'-phosphopantetheine moiety from coenzyme A to a Ser of acyl-carrier-protein.</text>
</comment>
<comment type="catalytic activity">
    <reaction evidence="1">
        <text>apo-[ACP] + CoA = holo-[ACP] + adenosine 3',5'-bisphosphate + H(+)</text>
        <dbReference type="Rhea" id="RHEA:12068"/>
        <dbReference type="Rhea" id="RHEA-COMP:9685"/>
        <dbReference type="Rhea" id="RHEA-COMP:9690"/>
        <dbReference type="ChEBI" id="CHEBI:15378"/>
        <dbReference type="ChEBI" id="CHEBI:29999"/>
        <dbReference type="ChEBI" id="CHEBI:57287"/>
        <dbReference type="ChEBI" id="CHEBI:58343"/>
        <dbReference type="ChEBI" id="CHEBI:64479"/>
        <dbReference type="EC" id="2.7.8.7"/>
    </reaction>
</comment>
<comment type="cofactor">
    <cofactor evidence="1">
        <name>Mg(2+)</name>
        <dbReference type="ChEBI" id="CHEBI:18420"/>
    </cofactor>
</comment>
<comment type="subcellular location">
    <subcellularLocation>
        <location evidence="1">Cytoplasm</location>
    </subcellularLocation>
</comment>
<comment type="similarity">
    <text evidence="1">Belongs to the P-Pant transferase superfamily. AcpS family.</text>
</comment>
<name>ACPS_BARHE</name>